<name>CCL5_CANLF</name>
<comment type="function">
    <text evidence="2">Chemoattractant for blood monocytes, memory T-helper cells and eosinophils. Causes the release of histamine from basophils and activates eosinophils. May activate several chemokine receptors including CCR1, CCR3, CCR4 and CCR5. May also be an agonist of the G protein-coupled receptor GPR75. Together with GPR75, may play a role in neuron survival through activation of a downstream signaling pathway involving the PI3, Akt and MAP kinases. By activating GPR75 may also play a role in insulin secretion by islet cells.</text>
</comment>
<comment type="subcellular location">
    <subcellularLocation>
        <location>Secreted</location>
    </subcellularLocation>
</comment>
<comment type="similarity">
    <text evidence="4">Belongs to the intercrine beta (chemokine CC) family.</text>
</comment>
<reference key="1">
    <citation type="submission" date="2002-12" db="EMBL/GenBank/DDBJ databases">
        <title>Molecular cloning of canine RANTES gene.</title>
        <authorList>
            <person name="Enomoto A."/>
            <person name="Kano R."/>
            <person name="Hasegawa A."/>
        </authorList>
    </citation>
    <scope>NUCLEOTIDE SEQUENCE [MRNA]</scope>
</reference>
<sequence>MKVSAATFAILLATATFRAPASASPYASDTTPCCFAYISGRLPFTHVQEYFYTSSKCSMPAVVFVTRKHRQVCANPQKKWVREYINSLEMS</sequence>
<protein>
    <recommendedName>
        <fullName>C-C motif chemokine 5</fullName>
    </recommendedName>
    <alternativeName>
        <fullName>Small-inducible cytokine A5</fullName>
    </alternativeName>
    <alternativeName>
        <fullName>T-cell-specific protein RANTES</fullName>
    </alternativeName>
</protein>
<organism>
    <name type="scientific">Canis lupus familiaris</name>
    <name type="common">Dog</name>
    <name type="synonym">Canis familiaris</name>
    <dbReference type="NCBI Taxonomy" id="9615"/>
    <lineage>
        <taxon>Eukaryota</taxon>
        <taxon>Metazoa</taxon>
        <taxon>Chordata</taxon>
        <taxon>Craniata</taxon>
        <taxon>Vertebrata</taxon>
        <taxon>Euteleostomi</taxon>
        <taxon>Mammalia</taxon>
        <taxon>Eutheria</taxon>
        <taxon>Laurasiatheria</taxon>
        <taxon>Carnivora</taxon>
        <taxon>Caniformia</taxon>
        <taxon>Canidae</taxon>
        <taxon>Canis</taxon>
    </lineage>
</organism>
<evidence type="ECO:0000250" key="1"/>
<evidence type="ECO:0000250" key="2">
    <source>
        <dbReference type="UniProtKB" id="P13501"/>
    </source>
</evidence>
<evidence type="ECO:0000255" key="3"/>
<evidence type="ECO:0000305" key="4"/>
<gene>
    <name type="primary">CCL5</name>
    <name type="synonym">SCYA5</name>
</gene>
<proteinExistence type="inferred from homology"/>
<accession>Q8HYS0</accession>
<dbReference type="EMBL" id="AB098562">
    <property type="protein sequence ID" value="BAC53725.1"/>
    <property type="molecule type" value="mRNA"/>
</dbReference>
<dbReference type="RefSeq" id="NP_001003010.1">
    <property type="nucleotide sequence ID" value="NM_001003010.2"/>
</dbReference>
<dbReference type="SMR" id="Q8HYS0"/>
<dbReference type="FunCoup" id="Q8HYS0">
    <property type="interactions" value="326"/>
</dbReference>
<dbReference type="STRING" id="9615.ENSCAFP00000063573"/>
<dbReference type="PaxDb" id="9612-ENSCAFP00000026835"/>
<dbReference type="GeneID" id="403522"/>
<dbReference type="KEGG" id="cfa:403522"/>
<dbReference type="CTD" id="6352"/>
<dbReference type="eggNOG" id="ENOG502S8D1">
    <property type="taxonomic scope" value="Eukaryota"/>
</dbReference>
<dbReference type="InParanoid" id="Q8HYS0"/>
<dbReference type="OrthoDB" id="8900217at2759"/>
<dbReference type="Proteomes" id="UP000002254">
    <property type="component" value="Unplaced"/>
</dbReference>
<dbReference type="Proteomes" id="UP000694429">
    <property type="component" value="Unplaced"/>
</dbReference>
<dbReference type="Proteomes" id="UP000694542">
    <property type="component" value="Unplaced"/>
</dbReference>
<dbReference type="Proteomes" id="UP000805418">
    <property type="component" value="Unplaced"/>
</dbReference>
<dbReference type="GO" id="GO:0005615">
    <property type="term" value="C:extracellular space"/>
    <property type="evidence" value="ECO:0000318"/>
    <property type="project" value="GO_Central"/>
</dbReference>
<dbReference type="GO" id="GO:0048020">
    <property type="term" value="F:CCR chemokine receptor binding"/>
    <property type="evidence" value="ECO:0000318"/>
    <property type="project" value="GO_Central"/>
</dbReference>
<dbReference type="GO" id="GO:0008009">
    <property type="term" value="F:chemokine activity"/>
    <property type="evidence" value="ECO:0000318"/>
    <property type="project" value="GO_Central"/>
</dbReference>
<dbReference type="GO" id="GO:0061844">
    <property type="term" value="P:antimicrobial humoral immune response mediated by antimicrobial peptide"/>
    <property type="evidence" value="ECO:0000318"/>
    <property type="project" value="GO_Central"/>
</dbReference>
<dbReference type="GO" id="GO:0070098">
    <property type="term" value="P:chemokine-mediated signaling pathway"/>
    <property type="evidence" value="ECO:0000250"/>
    <property type="project" value="UniProtKB"/>
</dbReference>
<dbReference type="GO" id="GO:0048245">
    <property type="term" value="P:eosinophil chemotaxis"/>
    <property type="evidence" value="ECO:0000318"/>
    <property type="project" value="GO_Central"/>
</dbReference>
<dbReference type="GO" id="GO:0007186">
    <property type="term" value="P:G protein-coupled receptor signaling pathway"/>
    <property type="evidence" value="ECO:0000250"/>
    <property type="project" value="UniProtKB"/>
</dbReference>
<dbReference type="GO" id="GO:0006954">
    <property type="term" value="P:inflammatory response"/>
    <property type="evidence" value="ECO:0000318"/>
    <property type="project" value="GO_Central"/>
</dbReference>
<dbReference type="GO" id="GO:0030335">
    <property type="term" value="P:positive regulation of cell migration"/>
    <property type="evidence" value="ECO:0000318"/>
    <property type="project" value="GO_Central"/>
</dbReference>
<dbReference type="GO" id="GO:0050796">
    <property type="term" value="P:regulation of insulin secretion"/>
    <property type="evidence" value="ECO:0000250"/>
    <property type="project" value="UniProtKB"/>
</dbReference>
<dbReference type="CDD" id="cd00272">
    <property type="entry name" value="Chemokine_CC"/>
    <property type="match status" value="1"/>
</dbReference>
<dbReference type="FunFam" id="2.40.50.40:FF:000002">
    <property type="entry name" value="C-C motif chemokine"/>
    <property type="match status" value="1"/>
</dbReference>
<dbReference type="Gene3D" id="2.40.50.40">
    <property type="match status" value="1"/>
</dbReference>
<dbReference type="InterPro" id="IPR039809">
    <property type="entry name" value="Chemokine_b/g/d"/>
</dbReference>
<dbReference type="InterPro" id="IPR000827">
    <property type="entry name" value="Chemokine_CC_CS"/>
</dbReference>
<dbReference type="InterPro" id="IPR001811">
    <property type="entry name" value="Chemokine_IL8-like_dom"/>
</dbReference>
<dbReference type="InterPro" id="IPR036048">
    <property type="entry name" value="Interleukin_8-like_sf"/>
</dbReference>
<dbReference type="PANTHER" id="PTHR12015:SF170">
    <property type="entry name" value="C-C MOTIF CHEMOKINE 5"/>
    <property type="match status" value="1"/>
</dbReference>
<dbReference type="PANTHER" id="PTHR12015">
    <property type="entry name" value="SMALL INDUCIBLE CYTOKINE A"/>
    <property type="match status" value="1"/>
</dbReference>
<dbReference type="Pfam" id="PF00048">
    <property type="entry name" value="IL8"/>
    <property type="match status" value="1"/>
</dbReference>
<dbReference type="SMART" id="SM00199">
    <property type="entry name" value="SCY"/>
    <property type="match status" value="1"/>
</dbReference>
<dbReference type="SUPFAM" id="SSF54117">
    <property type="entry name" value="Interleukin 8-like chemokines"/>
    <property type="match status" value="1"/>
</dbReference>
<dbReference type="PROSITE" id="PS00472">
    <property type="entry name" value="SMALL_CYTOKINES_CC"/>
    <property type="match status" value="1"/>
</dbReference>
<keyword id="KW-0145">Chemotaxis</keyword>
<keyword id="KW-0202">Cytokine</keyword>
<keyword id="KW-1015">Disulfide bond</keyword>
<keyword id="KW-0395">Inflammatory response</keyword>
<keyword id="KW-1185">Reference proteome</keyword>
<keyword id="KW-0964">Secreted</keyword>
<keyword id="KW-0732">Signal</keyword>
<feature type="signal peptide" evidence="3">
    <location>
        <begin position="1"/>
        <end position="23"/>
    </location>
</feature>
<feature type="chain" id="PRO_0000005171" description="C-C motif chemokine 5">
    <location>
        <begin position="24"/>
        <end position="91"/>
    </location>
</feature>
<feature type="disulfide bond" evidence="1">
    <location>
        <begin position="33"/>
        <end position="57"/>
    </location>
</feature>
<feature type="disulfide bond" evidence="1">
    <location>
        <begin position="34"/>
        <end position="73"/>
    </location>
</feature>